<name>ADEC1_HUMAN</name>
<sequence length="470" mass="52775">MLRGISQLPAVATMSWVLLPVLWLIVQTQAIAIKQTPELTLHEIVCPKKLHILHKREIKNNQTEKHGKEERYEPEVQYQMILNGEEIILSLQKTKHLLGPDYTETLYSPRGEEITTKPENMEHCYYKGNILNEKNSVASISTCDGLRGYFTHHHQRYQIKPLKSTDEKEHAVFTSNQEEQDPANHTCGVKSTDGKQGPIRISRSLKSPEKEDFLRAQKYIDLYLVLDNAFYKNYNENLTLIRSFVFDVMNLLNVIYNTIDVQVALVGMEIWSDGDKIKVVPSASTTFDNFLRWHSSNLGKKIHDHAQLLSGISFNNRRVGLAASNSLCSPSSVAVIEAKKKNNVALVGVMSHELGHVLGMPDVPFNTKCPSGSCVMNQYLSSKFPKDFSTSCRAHFERYLLSQKPKCLLQAPIPTNIMTTPVCGNHLLEVGEDCDCGSPKECTNLCCEALTCKLKPGTDCGGDAPNHTTE</sequence>
<feature type="signal peptide" evidence="2">
    <location>
        <begin position="1"/>
        <end position="30"/>
    </location>
</feature>
<feature type="propeptide" id="PRO_0000029146" evidence="2">
    <location>
        <begin position="31"/>
        <end position="205"/>
    </location>
</feature>
<feature type="chain" id="PRO_0000029147" description="ADAM DEC1">
    <location>
        <begin position="206"/>
        <end position="470"/>
    </location>
</feature>
<feature type="domain" description="Peptidase M12B" evidence="4">
    <location>
        <begin position="218"/>
        <end position="412"/>
    </location>
</feature>
<feature type="domain" description="Disintegrin" evidence="3">
    <location>
        <begin position="420"/>
        <end position="470"/>
    </location>
</feature>
<feature type="region of interest" description="Disordered" evidence="6">
    <location>
        <begin position="173"/>
        <end position="200"/>
    </location>
</feature>
<feature type="active site" evidence="4 5">
    <location>
        <position position="353"/>
    </location>
</feature>
<feature type="binding site" evidence="1">
    <location>
        <position position="352"/>
    </location>
    <ligand>
        <name>Zn(2+)</name>
        <dbReference type="ChEBI" id="CHEBI:29105"/>
        <note>catalytic</note>
    </ligand>
</feature>
<feature type="binding site" evidence="1">
    <location>
        <position position="356"/>
    </location>
    <ligand>
        <name>Zn(2+)</name>
        <dbReference type="ChEBI" id="CHEBI:29105"/>
        <note>catalytic</note>
    </ligand>
</feature>
<feature type="binding site" evidence="2">
    <location>
        <position position="362"/>
    </location>
    <ligand>
        <name>Zn(2+)</name>
        <dbReference type="ChEBI" id="CHEBI:29105"/>
        <note>catalytic</note>
    </ligand>
</feature>
<feature type="glycosylation site" description="N-linked (GlcNAc...) asparagine" evidence="2">
    <location>
        <position position="61"/>
    </location>
</feature>
<feature type="glycosylation site" description="N-linked (GlcNAc...) (complex) asparagine" evidence="9">
    <location>
        <position position="184"/>
    </location>
</feature>
<feature type="glycosylation site" description="N-linked (GlcNAc...) asparagine" evidence="8">
    <location>
        <position position="237"/>
    </location>
</feature>
<feature type="glycosylation site" description="N-linked (GlcNAc...) asparagine" evidence="2">
    <location>
        <position position="466"/>
    </location>
</feature>
<feature type="disulfide bond" evidence="1">
    <location>
        <begin position="328"/>
        <end position="407"/>
    </location>
</feature>
<feature type="disulfide bond" evidence="1">
    <location>
        <begin position="369"/>
        <end position="374"/>
    </location>
</feature>
<feature type="splice variant" id="VSP_043124" description="In isoform 2." evidence="11">
    <location>
        <begin position="1"/>
        <end position="79"/>
    </location>
</feature>
<feature type="sequence variant" id="VAR_024598" description="In dbSNP:rs7007084.">
    <original>M</original>
    <variation>T</variation>
    <location>
        <position position="121"/>
    </location>
</feature>
<feature type="sequence variant" id="VAR_021848" description="In dbSNP:rs3765124.">
    <original>N</original>
    <variation>S</variation>
    <location>
        <position position="444"/>
    </location>
</feature>
<organism>
    <name type="scientific">Homo sapiens</name>
    <name type="common">Human</name>
    <dbReference type="NCBI Taxonomy" id="9606"/>
    <lineage>
        <taxon>Eukaryota</taxon>
        <taxon>Metazoa</taxon>
        <taxon>Chordata</taxon>
        <taxon>Craniata</taxon>
        <taxon>Vertebrata</taxon>
        <taxon>Euteleostomi</taxon>
        <taxon>Mammalia</taxon>
        <taxon>Eutheria</taxon>
        <taxon>Euarchontoglires</taxon>
        <taxon>Primates</taxon>
        <taxon>Haplorrhini</taxon>
        <taxon>Catarrhini</taxon>
        <taxon>Hominidae</taxon>
        <taxon>Homo</taxon>
    </lineage>
</organism>
<evidence type="ECO:0000250" key="1"/>
<evidence type="ECO:0000255" key="2"/>
<evidence type="ECO:0000255" key="3">
    <source>
        <dbReference type="PROSITE-ProRule" id="PRU00068"/>
    </source>
</evidence>
<evidence type="ECO:0000255" key="4">
    <source>
        <dbReference type="PROSITE-ProRule" id="PRU00276"/>
    </source>
</evidence>
<evidence type="ECO:0000255" key="5">
    <source>
        <dbReference type="PROSITE-ProRule" id="PRU10095"/>
    </source>
</evidence>
<evidence type="ECO:0000256" key="6">
    <source>
        <dbReference type="SAM" id="MobiDB-lite"/>
    </source>
</evidence>
<evidence type="ECO:0000269" key="7">
    <source>
    </source>
</evidence>
<evidence type="ECO:0000269" key="8">
    <source>
    </source>
</evidence>
<evidence type="ECO:0000269" key="9">
    <source>
    </source>
</evidence>
<evidence type="ECO:0000269" key="10">
    <source>
    </source>
</evidence>
<evidence type="ECO:0000303" key="11">
    <source>
    </source>
</evidence>
<comment type="function">
    <text evidence="1">May play an important role in the control of the immune response and during pregnancy.</text>
</comment>
<comment type="cofactor">
    <cofactor evidence="1">
        <name>Zn(2+)</name>
        <dbReference type="ChEBI" id="CHEBI:29105"/>
    </cofactor>
    <text evidence="1">Binds 1 zinc ion per subunit.</text>
</comment>
<comment type="subcellular location">
    <subcellularLocation>
        <location evidence="1">Secreted</location>
    </subcellularLocation>
</comment>
<comment type="alternative products">
    <event type="alternative splicing"/>
    <isoform>
        <id>O15204-1</id>
        <name>1</name>
        <sequence type="displayed"/>
    </isoform>
    <isoform>
        <id>O15204-2</id>
        <name>2</name>
        <sequence type="described" ref="VSP_043124"/>
    </isoform>
</comment>
<comment type="tissue specificity">
    <text evidence="7 10">Expressed highly in the small intestine and appendix, moderately in lymph node, mucosal lining of the colon, thymus, spleen and very weakly in the bone marrow. Predominantly expressed in dendritic cells (DC) of the germinal center. Weakly expressed in monocyte and highly expressed in macrophage. Absent in immature DC.</text>
</comment>
<comment type="induction">
    <text evidence="7 10">Induced during DC maturation and up-regulated in response to T-cell signals. In macrophage up-regulated by bacterial lipopolysaccharides (LPS). Up-regulated by 1-alpha,25-dihydroxyvitamin D3 during differentiation of primary monocyte into macrophage.</text>
</comment>
<dbReference type="EC" id="3.4.24.-"/>
<dbReference type="EMBL" id="Y13323">
    <property type="protein sequence ID" value="CAA73764.2"/>
    <property type="molecule type" value="mRNA"/>
</dbReference>
<dbReference type="EMBL" id="AK316320">
    <property type="protein sequence ID" value="BAH14691.1"/>
    <property type="molecule type" value="mRNA"/>
</dbReference>
<dbReference type="EMBL" id="AK316322">
    <property type="protein sequence ID" value="BAH14693.1"/>
    <property type="molecule type" value="mRNA"/>
</dbReference>
<dbReference type="EMBL" id="AC120193">
    <property type="status" value="NOT_ANNOTATED_CDS"/>
    <property type="molecule type" value="Genomic_DNA"/>
</dbReference>
<dbReference type="EMBL" id="BC069582">
    <property type="protein sequence ID" value="AAH69582.1"/>
    <property type="molecule type" value="mRNA"/>
</dbReference>
<dbReference type="EMBL" id="BC074877">
    <property type="protein sequence ID" value="AAH74877.1"/>
    <property type="molecule type" value="mRNA"/>
</dbReference>
<dbReference type="EMBL" id="BC074878">
    <property type="protein sequence ID" value="AAH74878.1"/>
    <property type="molecule type" value="mRNA"/>
</dbReference>
<dbReference type="CCDS" id="CCDS55212.1">
    <molecule id="O15204-2"/>
</dbReference>
<dbReference type="CCDS" id="CCDS6044.1">
    <molecule id="O15204-1"/>
</dbReference>
<dbReference type="RefSeq" id="NP_001138743.1">
    <molecule id="O15204-2"/>
    <property type="nucleotide sequence ID" value="NM_001145271.2"/>
</dbReference>
<dbReference type="RefSeq" id="NP_001138744.1">
    <molecule id="O15204-2"/>
    <property type="nucleotide sequence ID" value="NM_001145272.2"/>
</dbReference>
<dbReference type="RefSeq" id="NP_055294.1">
    <molecule id="O15204-1"/>
    <property type="nucleotide sequence ID" value="NM_014479.3"/>
</dbReference>
<dbReference type="SMR" id="O15204"/>
<dbReference type="IntAct" id="O15204">
    <property type="interactions" value="1"/>
</dbReference>
<dbReference type="STRING" id="9606.ENSP00000256412"/>
<dbReference type="MEROPS" id="M12.219"/>
<dbReference type="GlyConnect" id="1910">
    <property type="glycosylation" value="19 N-Linked glycans (2 sites)"/>
</dbReference>
<dbReference type="GlyCosmos" id="O15204">
    <property type="glycosylation" value="4 sites, 25 glycans"/>
</dbReference>
<dbReference type="GlyGen" id="O15204">
    <property type="glycosylation" value="4 sites, 31 N-linked glycans (2 sites)"/>
</dbReference>
<dbReference type="iPTMnet" id="O15204"/>
<dbReference type="PhosphoSitePlus" id="O15204"/>
<dbReference type="BioMuta" id="ADAMDEC1"/>
<dbReference type="jPOST" id="O15204"/>
<dbReference type="MassIVE" id="O15204"/>
<dbReference type="PaxDb" id="9606-ENSP00000256412"/>
<dbReference type="PeptideAtlas" id="O15204"/>
<dbReference type="ProteomicsDB" id="48507">
    <molecule id="O15204-1"/>
</dbReference>
<dbReference type="ProteomicsDB" id="48508">
    <molecule id="O15204-2"/>
</dbReference>
<dbReference type="Antibodypedia" id="22827">
    <property type="antibodies" value="165 antibodies from 29 providers"/>
</dbReference>
<dbReference type="DNASU" id="27299"/>
<dbReference type="Ensembl" id="ENST00000256412.8">
    <molecule id="O15204-1"/>
    <property type="protein sequence ID" value="ENSP00000256412.4"/>
    <property type="gene ID" value="ENSG00000134028.14"/>
</dbReference>
<dbReference type="Ensembl" id="ENST00000522298.1">
    <molecule id="O15204-2"/>
    <property type="protein sequence ID" value="ENSP00000428993.1"/>
    <property type="gene ID" value="ENSG00000134028.14"/>
</dbReference>
<dbReference type="GeneID" id="27299"/>
<dbReference type="KEGG" id="hsa:27299"/>
<dbReference type="MANE-Select" id="ENST00000256412.8">
    <property type="protein sequence ID" value="ENSP00000256412.4"/>
    <property type="RefSeq nucleotide sequence ID" value="NM_014479.3"/>
    <property type="RefSeq protein sequence ID" value="NP_055294.1"/>
</dbReference>
<dbReference type="UCSC" id="uc003xdz.2">
    <molecule id="O15204-1"/>
    <property type="organism name" value="human"/>
</dbReference>
<dbReference type="AGR" id="HGNC:16299"/>
<dbReference type="CTD" id="27299"/>
<dbReference type="DisGeNET" id="27299"/>
<dbReference type="GeneCards" id="ADAMDEC1"/>
<dbReference type="HGNC" id="HGNC:16299">
    <property type="gene designation" value="ADAMDEC1"/>
</dbReference>
<dbReference type="HPA" id="ENSG00000134028">
    <property type="expression patterns" value="Tissue enriched (intestine)"/>
</dbReference>
<dbReference type="MIM" id="606393">
    <property type="type" value="gene"/>
</dbReference>
<dbReference type="neXtProt" id="NX_O15204"/>
<dbReference type="OpenTargets" id="ENSG00000134028"/>
<dbReference type="PharmGKB" id="PA24535"/>
<dbReference type="VEuPathDB" id="HostDB:ENSG00000134028"/>
<dbReference type="eggNOG" id="KOG3607">
    <property type="taxonomic scope" value="Eukaryota"/>
</dbReference>
<dbReference type="GeneTree" id="ENSGT00900000141143"/>
<dbReference type="HOGENOM" id="CLU_012714_8_0_1"/>
<dbReference type="InParanoid" id="O15204"/>
<dbReference type="OMA" id="KMKIHDH"/>
<dbReference type="OrthoDB" id="5951731at2759"/>
<dbReference type="PAN-GO" id="O15204">
    <property type="GO annotations" value="0 GO annotations based on evolutionary models"/>
</dbReference>
<dbReference type="PhylomeDB" id="O15204"/>
<dbReference type="TreeFam" id="TF314733"/>
<dbReference type="PathwayCommons" id="O15204"/>
<dbReference type="SignaLink" id="O15204"/>
<dbReference type="BioGRID-ORCS" id="27299">
    <property type="hits" value="8 hits in 1149 CRISPR screens"/>
</dbReference>
<dbReference type="ChiTaRS" id="ADAMDEC1">
    <property type="organism name" value="human"/>
</dbReference>
<dbReference type="GenomeRNAi" id="27299"/>
<dbReference type="Pharos" id="O15204">
    <property type="development level" value="Tbio"/>
</dbReference>
<dbReference type="PRO" id="PR:O15204"/>
<dbReference type="Proteomes" id="UP000005640">
    <property type="component" value="Chromosome 8"/>
</dbReference>
<dbReference type="RNAct" id="O15204">
    <property type="molecule type" value="protein"/>
</dbReference>
<dbReference type="Bgee" id="ENSG00000134028">
    <property type="expression patterns" value="Expressed in jejunal mucosa and 111 other cell types or tissues"/>
</dbReference>
<dbReference type="ExpressionAtlas" id="O15204">
    <property type="expression patterns" value="baseline and differential"/>
</dbReference>
<dbReference type="GO" id="GO:0062023">
    <property type="term" value="C:collagen-containing extracellular matrix"/>
    <property type="evidence" value="ECO:0007005"/>
    <property type="project" value="BHF-UCL"/>
</dbReference>
<dbReference type="GO" id="GO:0005576">
    <property type="term" value="C:extracellular region"/>
    <property type="evidence" value="ECO:0007669"/>
    <property type="project" value="UniProtKB-SubCell"/>
</dbReference>
<dbReference type="GO" id="GO:0004222">
    <property type="term" value="F:metalloendopeptidase activity"/>
    <property type="evidence" value="ECO:0000318"/>
    <property type="project" value="GO_Central"/>
</dbReference>
<dbReference type="GO" id="GO:0008270">
    <property type="term" value="F:zinc ion binding"/>
    <property type="evidence" value="ECO:0000303"/>
    <property type="project" value="UniProtKB"/>
</dbReference>
<dbReference type="GO" id="GO:0006955">
    <property type="term" value="P:immune response"/>
    <property type="evidence" value="ECO:0000303"/>
    <property type="project" value="UniProtKB"/>
</dbReference>
<dbReference type="GO" id="GO:0007162">
    <property type="term" value="P:negative regulation of cell adhesion"/>
    <property type="evidence" value="ECO:0000303"/>
    <property type="project" value="UniProtKB"/>
</dbReference>
<dbReference type="GO" id="GO:0006508">
    <property type="term" value="P:proteolysis"/>
    <property type="evidence" value="ECO:0000318"/>
    <property type="project" value="GO_Central"/>
</dbReference>
<dbReference type="CDD" id="cd04269">
    <property type="entry name" value="ZnMc_adamalysin_II_like"/>
    <property type="match status" value="1"/>
</dbReference>
<dbReference type="FunFam" id="4.10.70.10:FF:000006">
    <property type="entry name" value="ADAM like decysin 1"/>
    <property type="match status" value="1"/>
</dbReference>
<dbReference type="FunFam" id="3.40.390.10:FF:000002">
    <property type="entry name" value="Disintegrin and metalloproteinase domain-containing protein 22"/>
    <property type="match status" value="1"/>
</dbReference>
<dbReference type="Gene3D" id="3.40.390.10">
    <property type="entry name" value="Collagenase (Catalytic Domain)"/>
    <property type="match status" value="1"/>
</dbReference>
<dbReference type="Gene3D" id="4.10.70.10">
    <property type="entry name" value="Disintegrin domain"/>
    <property type="match status" value="1"/>
</dbReference>
<dbReference type="InterPro" id="IPR001762">
    <property type="entry name" value="Disintegrin_dom"/>
</dbReference>
<dbReference type="InterPro" id="IPR036436">
    <property type="entry name" value="Disintegrin_dom_sf"/>
</dbReference>
<dbReference type="InterPro" id="IPR024079">
    <property type="entry name" value="MetalloPept_cat_dom_sf"/>
</dbReference>
<dbReference type="InterPro" id="IPR001590">
    <property type="entry name" value="Peptidase_M12B"/>
</dbReference>
<dbReference type="InterPro" id="IPR002870">
    <property type="entry name" value="Peptidase_M12B_N"/>
</dbReference>
<dbReference type="InterPro" id="IPR034027">
    <property type="entry name" value="Reprolysin_adamalysin"/>
</dbReference>
<dbReference type="PANTHER" id="PTHR11905">
    <property type="entry name" value="ADAM A DISINTEGRIN AND METALLOPROTEASE DOMAIN"/>
    <property type="match status" value="1"/>
</dbReference>
<dbReference type="PANTHER" id="PTHR11905:SF125">
    <property type="entry name" value="ADAM DEC1"/>
    <property type="match status" value="1"/>
</dbReference>
<dbReference type="Pfam" id="PF01562">
    <property type="entry name" value="Pep_M12B_propep"/>
    <property type="match status" value="1"/>
</dbReference>
<dbReference type="Pfam" id="PF01421">
    <property type="entry name" value="Reprolysin"/>
    <property type="match status" value="1"/>
</dbReference>
<dbReference type="SMART" id="SM00050">
    <property type="entry name" value="DISIN"/>
    <property type="match status" value="1"/>
</dbReference>
<dbReference type="SUPFAM" id="SSF57552">
    <property type="entry name" value="Blood coagulation inhibitor (disintegrin)"/>
    <property type="match status" value="1"/>
</dbReference>
<dbReference type="SUPFAM" id="SSF55486">
    <property type="entry name" value="Metalloproteases ('zincins'), catalytic domain"/>
    <property type="match status" value="1"/>
</dbReference>
<dbReference type="PROSITE" id="PS50215">
    <property type="entry name" value="ADAM_MEPRO"/>
    <property type="match status" value="1"/>
</dbReference>
<dbReference type="PROSITE" id="PS50214">
    <property type="entry name" value="DISINTEGRIN_2"/>
    <property type="match status" value="1"/>
</dbReference>
<dbReference type="PROSITE" id="PS00142">
    <property type="entry name" value="ZINC_PROTEASE"/>
    <property type="match status" value="1"/>
</dbReference>
<protein>
    <recommendedName>
        <fullName>ADAM DEC1</fullName>
        <ecNumber>3.4.24.-</ecNumber>
    </recommendedName>
    <alternativeName>
        <fullName>A disintegrin and metalloproteinase domain-like protein decysin-1</fullName>
        <shortName>ADAM-like protein decysin-1</shortName>
    </alternativeName>
</protein>
<reference key="1">
    <citation type="journal article" date="1997" name="J. Exp. Med.">
        <title>Polymerase chain reaction selects a novel disintegrin proteinase from CD40-activated germinal center dendritic cells.</title>
        <authorList>
            <person name="Mueller C.G.F."/>
            <person name="Rissoan M.C."/>
            <person name="Salinas B."/>
            <person name="Ait-Yahia S."/>
            <person name="Ravel O."/>
            <person name="Bridon J.-M."/>
            <person name="Briere F."/>
            <person name="Lebecque S."/>
            <person name="Liu Y.J."/>
        </authorList>
    </citation>
    <scope>NUCLEOTIDE SEQUENCE [MRNA] (ISOFORM 1)</scope>
    <scope>TISSUE SPECIFICITY</scope>
    <scope>INDUCTION</scope>
</reference>
<reference key="2">
    <citation type="journal article" date="2004" name="Nat. Genet.">
        <title>Complete sequencing and characterization of 21,243 full-length human cDNAs.</title>
        <authorList>
            <person name="Ota T."/>
            <person name="Suzuki Y."/>
            <person name="Nishikawa T."/>
            <person name="Otsuki T."/>
            <person name="Sugiyama T."/>
            <person name="Irie R."/>
            <person name="Wakamatsu A."/>
            <person name="Hayashi K."/>
            <person name="Sato H."/>
            <person name="Nagai K."/>
            <person name="Kimura K."/>
            <person name="Makita H."/>
            <person name="Sekine M."/>
            <person name="Obayashi M."/>
            <person name="Nishi T."/>
            <person name="Shibahara T."/>
            <person name="Tanaka T."/>
            <person name="Ishii S."/>
            <person name="Yamamoto J."/>
            <person name="Saito K."/>
            <person name="Kawai Y."/>
            <person name="Isono Y."/>
            <person name="Nakamura Y."/>
            <person name="Nagahari K."/>
            <person name="Murakami K."/>
            <person name="Yasuda T."/>
            <person name="Iwayanagi T."/>
            <person name="Wagatsuma M."/>
            <person name="Shiratori A."/>
            <person name="Sudo H."/>
            <person name="Hosoiri T."/>
            <person name="Kaku Y."/>
            <person name="Kodaira H."/>
            <person name="Kondo H."/>
            <person name="Sugawara M."/>
            <person name="Takahashi M."/>
            <person name="Kanda K."/>
            <person name="Yokoi T."/>
            <person name="Furuya T."/>
            <person name="Kikkawa E."/>
            <person name="Omura Y."/>
            <person name="Abe K."/>
            <person name="Kamihara K."/>
            <person name="Katsuta N."/>
            <person name="Sato K."/>
            <person name="Tanikawa M."/>
            <person name="Yamazaki M."/>
            <person name="Ninomiya K."/>
            <person name="Ishibashi T."/>
            <person name="Yamashita H."/>
            <person name="Murakawa K."/>
            <person name="Fujimori K."/>
            <person name="Tanai H."/>
            <person name="Kimata M."/>
            <person name="Watanabe M."/>
            <person name="Hiraoka S."/>
            <person name="Chiba Y."/>
            <person name="Ishida S."/>
            <person name="Ono Y."/>
            <person name="Takiguchi S."/>
            <person name="Watanabe S."/>
            <person name="Yosida M."/>
            <person name="Hotuta T."/>
            <person name="Kusano J."/>
            <person name="Kanehori K."/>
            <person name="Takahashi-Fujii A."/>
            <person name="Hara H."/>
            <person name="Tanase T.-O."/>
            <person name="Nomura Y."/>
            <person name="Togiya S."/>
            <person name="Komai F."/>
            <person name="Hara R."/>
            <person name="Takeuchi K."/>
            <person name="Arita M."/>
            <person name="Imose N."/>
            <person name="Musashino K."/>
            <person name="Yuuki H."/>
            <person name="Oshima A."/>
            <person name="Sasaki N."/>
            <person name="Aotsuka S."/>
            <person name="Yoshikawa Y."/>
            <person name="Matsunawa H."/>
            <person name="Ichihara T."/>
            <person name="Shiohata N."/>
            <person name="Sano S."/>
            <person name="Moriya S."/>
            <person name="Momiyama H."/>
            <person name="Satoh N."/>
            <person name="Takami S."/>
            <person name="Terashima Y."/>
            <person name="Suzuki O."/>
            <person name="Nakagawa S."/>
            <person name="Senoh A."/>
            <person name="Mizoguchi H."/>
            <person name="Goto Y."/>
            <person name="Shimizu F."/>
            <person name="Wakebe H."/>
            <person name="Hishigaki H."/>
            <person name="Watanabe T."/>
            <person name="Sugiyama A."/>
            <person name="Takemoto M."/>
            <person name="Kawakami B."/>
            <person name="Yamazaki M."/>
            <person name="Watanabe K."/>
            <person name="Kumagai A."/>
            <person name="Itakura S."/>
            <person name="Fukuzumi Y."/>
            <person name="Fujimori Y."/>
            <person name="Komiyama M."/>
            <person name="Tashiro H."/>
            <person name="Tanigami A."/>
            <person name="Fujiwara T."/>
            <person name="Ono T."/>
            <person name="Yamada K."/>
            <person name="Fujii Y."/>
            <person name="Ozaki K."/>
            <person name="Hirao M."/>
            <person name="Ohmori Y."/>
            <person name="Kawabata A."/>
            <person name="Hikiji T."/>
            <person name="Kobatake N."/>
            <person name="Inagaki H."/>
            <person name="Ikema Y."/>
            <person name="Okamoto S."/>
            <person name="Okitani R."/>
            <person name="Kawakami T."/>
            <person name="Noguchi S."/>
            <person name="Itoh T."/>
            <person name="Shigeta K."/>
            <person name="Senba T."/>
            <person name="Matsumura K."/>
            <person name="Nakajima Y."/>
            <person name="Mizuno T."/>
            <person name="Morinaga M."/>
            <person name="Sasaki M."/>
            <person name="Togashi T."/>
            <person name="Oyama M."/>
            <person name="Hata H."/>
            <person name="Watanabe M."/>
            <person name="Komatsu T."/>
            <person name="Mizushima-Sugano J."/>
            <person name="Satoh T."/>
            <person name="Shirai Y."/>
            <person name="Takahashi Y."/>
            <person name="Nakagawa K."/>
            <person name="Okumura K."/>
            <person name="Nagase T."/>
            <person name="Nomura N."/>
            <person name="Kikuchi H."/>
            <person name="Masuho Y."/>
            <person name="Yamashita R."/>
            <person name="Nakai K."/>
            <person name="Yada T."/>
            <person name="Nakamura Y."/>
            <person name="Ohara O."/>
            <person name="Isogai T."/>
            <person name="Sugano S."/>
        </authorList>
    </citation>
    <scope>NUCLEOTIDE SEQUENCE [LARGE SCALE MRNA] (ISOFORM 2)</scope>
    <source>
        <tissue>Small intestine</tissue>
    </source>
</reference>
<reference key="3">
    <citation type="journal article" date="2006" name="Nature">
        <title>DNA sequence and analysis of human chromosome 8.</title>
        <authorList>
            <person name="Nusbaum C."/>
            <person name="Mikkelsen T.S."/>
            <person name="Zody M.C."/>
            <person name="Asakawa S."/>
            <person name="Taudien S."/>
            <person name="Garber M."/>
            <person name="Kodira C.D."/>
            <person name="Schueler M.G."/>
            <person name="Shimizu A."/>
            <person name="Whittaker C.A."/>
            <person name="Chang J.L."/>
            <person name="Cuomo C.A."/>
            <person name="Dewar K."/>
            <person name="FitzGerald M.G."/>
            <person name="Yang X."/>
            <person name="Allen N.R."/>
            <person name="Anderson S."/>
            <person name="Asakawa T."/>
            <person name="Blechschmidt K."/>
            <person name="Bloom T."/>
            <person name="Borowsky M.L."/>
            <person name="Butler J."/>
            <person name="Cook A."/>
            <person name="Corum B."/>
            <person name="DeArellano K."/>
            <person name="DeCaprio D."/>
            <person name="Dooley K.T."/>
            <person name="Dorris L. III"/>
            <person name="Engels R."/>
            <person name="Gloeckner G."/>
            <person name="Hafez N."/>
            <person name="Hagopian D.S."/>
            <person name="Hall J.L."/>
            <person name="Ishikawa S.K."/>
            <person name="Jaffe D.B."/>
            <person name="Kamat A."/>
            <person name="Kudoh J."/>
            <person name="Lehmann R."/>
            <person name="Lokitsang T."/>
            <person name="Macdonald P."/>
            <person name="Major J.E."/>
            <person name="Matthews C.D."/>
            <person name="Mauceli E."/>
            <person name="Menzel U."/>
            <person name="Mihalev A.H."/>
            <person name="Minoshima S."/>
            <person name="Murayama Y."/>
            <person name="Naylor J.W."/>
            <person name="Nicol R."/>
            <person name="Nguyen C."/>
            <person name="O'Leary S.B."/>
            <person name="O'Neill K."/>
            <person name="Parker S.C.J."/>
            <person name="Polley A."/>
            <person name="Raymond C.K."/>
            <person name="Reichwald K."/>
            <person name="Rodriguez J."/>
            <person name="Sasaki T."/>
            <person name="Schilhabel M."/>
            <person name="Siddiqui R."/>
            <person name="Smith C.L."/>
            <person name="Sneddon T.P."/>
            <person name="Talamas J.A."/>
            <person name="Tenzin P."/>
            <person name="Topham K."/>
            <person name="Venkataraman V."/>
            <person name="Wen G."/>
            <person name="Yamazaki S."/>
            <person name="Young S.K."/>
            <person name="Zeng Q."/>
            <person name="Zimmer A.R."/>
            <person name="Rosenthal A."/>
            <person name="Birren B.W."/>
            <person name="Platzer M."/>
            <person name="Shimizu N."/>
            <person name="Lander E.S."/>
        </authorList>
    </citation>
    <scope>NUCLEOTIDE SEQUENCE [LARGE SCALE GENOMIC DNA]</scope>
</reference>
<reference key="4">
    <citation type="journal article" date="2004" name="Genome Res.">
        <title>The status, quality, and expansion of the NIH full-length cDNA project: the Mammalian Gene Collection (MGC).</title>
        <authorList>
            <consortium name="The MGC Project Team"/>
        </authorList>
    </citation>
    <scope>NUCLEOTIDE SEQUENCE [LARGE SCALE MRNA] (ISOFORM 1)</scope>
    <source>
        <tissue>Lung</tissue>
    </source>
</reference>
<reference key="5">
    <citation type="journal article" date="2003" name="Immunology">
        <title>Inverse regulation of the ADAM-family members, decysin and MADDAM/ADAM19 during monocyte differentiation.</title>
        <authorList>
            <person name="Fritsche J."/>
            <person name="Muller A."/>
            <person name="Hausmann M."/>
            <person name="Rogler G."/>
            <person name="Andreesen R."/>
            <person name="Kreutz M."/>
        </authorList>
    </citation>
    <scope>TISSUE SPECIFICITY</scope>
    <scope>INDUCTION</scope>
</reference>
<reference key="6">
    <citation type="journal article" date="2005" name="J. Proteome Res.">
        <title>Human plasma N-glycoproteome analysis by immunoaffinity subtraction, hydrazide chemistry, and mass spectrometry.</title>
        <authorList>
            <person name="Liu T."/>
            <person name="Qian W.-J."/>
            <person name="Gritsenko M.A."/>
            <person name="Camp D.G. II"/>
            <person name="Monroe M.E."/>
            <person name="Moore R.J."/>
            <person name="Smith R.D."/>
        </authorList>
    </citation>
    <scope>GLYCOSYLATION [LARGE SCALE ANALYSIS] AT ASN-237</scope>
    <source>
        <tissue>Plasma</tissue>
    </source>
</reference>
<reference key="7">
    <citation type="journal article" date="2009" name="Mol. Cell. Proteomics">
        <title>A strategy for precise and large scale identification of core fucosylated glycoproteins.</title>
        <authorList>
            <person name="Jia W."/>
            <person name="Lu Z."/>
            <person name="Fu Y."/>
            <person name="Wang H.P."/>
            <person name="Wang L.H."/>
            <person name="Chi H."/>
            <person name="Yuan Z.F."/>
            <person name="Zheng Z.B."/>
            <person name="Song L.N."/>
            <person name="Han H.H."/>
            <person name="Liang Y.M."/>
            <person name="Wang J.L."/>
            <person name="Cai Y."/>
            <person name="Zhang Y.K."/>
            <person name="Deng Y.L."/>
            <person name="Ying W.T."/>
            <person name="He S.M."/>
            <person name="Qian X.H."/>
        </authorList>
    </citation>
    <scope>GLYCOSYLATION AT ASN-184</scope>
</reference>
<proteinExistence type="evidence at protein level"/>
<keyword id="KW-0025">Alternative splicing</keyword>
<keyword id="KW-1015">Disulfide bond</keyword>
<keyword id="KW-0325">Glycoprotein</keyword>
<keyword id="KW-0378">Hydrolase</keyword>
<keyword id="KW-0479">Metal-binding</keyword>
<keyword id="KW-0482">Metalloprotease</keyword>
<keyword id="KW-0645">Protease</keyword>
<keyword id="KW-1267">Proteomics identification</keyword>
<keyword id="KW-1185">Reference proteome</keyword>
<keyword id="KW-0964">Secreted</keyword>
<keyword id="KW-0732">Signal</keyword>
<keyword id="KW-0862">Zinc</keyword>
<keyword id="KW-0865">Zymogen</keyword>
<gene>
    <name type="primary">ADAMDEC1</name>
</gene>
<accession>O15204</accession>
<accession>B7ZAK5</accession>